<reference key="1">
    <citation type="journal article" date="2007" name="Nat. Biotechnol.">
        <title>Genome sequence of the lignocellulose-bioconverting and xylose-fermenting yeast Pichia stipitis.</title>
        <authorList>
            <person name="Jeffries T.W."/>
            <person name="Grigoriev I.V."/>
            <person name="Grimwood J."/>
            <person name="Laplaza J.M."/>
            <person name="Aerts A."/>
            <person name="Salamov A."/>
            <person name="Schmutz J."/>
            <person name="Lindquist E."/>
            <person name="Dehal P."/>
            <person name="Shapiro H."/>
            <person name="Jin Y.-S."/>
            <person name="Passoth V."/>
            <person name="Richardson P.M."/>
        </authorList>
    </citation>
    <scope>NUCLEOTIDE SEQUENCE [LARGE SCALE GENOMIC DNA]</scope>
    <source>
        <strain>ATCC 58785 / CBS 6054 / NBRC 10063 / NRRL Y-11545</strain>
    </source>
</reference>
<accession>A3LP19</accession>
<comment type="function">
    <text evidence="1">Involved in ribosome biogenesis, probably through modulation of rDNA transcription.</text>
</comment>
<comment type="subcellular location">
    <subcellularLocation>
        <location evidence="1">Nucleus</location>
        <location evidence="1">Nucleolus</location>
    </subcellularLocation>
</comment>
<comment type="similarity">
    <text evidence="2">Belongs to the RRT14 family.</text>
</comment>
<organism>
    <name type="scientific">Scheffersomyces stipitis (strain ATCC 58785 / CBS 6054 / NBRC 10063 / NRRL Y-11545)</name>
    <name type="common">Yeast</name>
    <name type="synonym">Pichia stipitis</name>
    <dbReference type="NCBI Taxonomy" id="322104"/>
    <lineage>
        <taxon>Eukaryota</taxon>
        <taxon>Fungi</taxon>
        <taxon>Dikarya</taxon>
        <taxon>Ascomycota</taxon>
        <taxon>Saccharomycotina</taxon>
        <taxon>Pichiomycetes</taxon>
        <taxon>Debaryomycetaceae</taxon>
        <taxon>Scheffersomyces</taxon>
    </lineage>
</organism>
<protein>
    <recommendedName>
        <fullName>Regulator of rDNA transcription 14</fullName>
    </recommendedName>
</protein>
<gene>
    <name type="primary">RRT14</name>
    <name type="ORF">PICST_29791</name>
</gene>
<proteinExistence type="inferred from homology"/>
<dbReference type="EMBL" id="CP000496">
    <property type="protein sequence ID" value="ABN64973.2"/>
    <property type="molecule type" value="Genomic_DNA"/>
</dbReference>
<dbReference type="RefSeq" id="XP_001383002.2">
    <property type="nucleotide sequence ID" value="XM_001382965.1"/>
</dbReference>
<dbReference type="SMR" id="A3LP19"/>
<dbReference type="FunCoup" id="A3LP19">
    <property type="interactions" value="271"/>
</dbReference>
<dbReference type="STRING" id="322104.A3LP19"/>
<dbReference type="GeneID" id="4836935"/>
<dbReference type="KEGG" id="pic:PICST_29791"/>
<dbReference type="eggNOG" id="ENOG502S1G1">
    <property type="taxonomic scope" value="Eukaryota"/>
</dbReference>
<dbReference type="HOGENOM" id="CLU_095038_0_0_1"/>
<dbReference type="InParanoid" id="A3LP19"/>
<dbReference type="OMA" id="LNNTKQV"/>
<dbReference type="OrthoDB" id="4069371at2759"/>
<dbReference type="Proteomes" id="UP000002258">
    <property type="component" value="Chromosome 2"/>
</dbReference>
<dbReference type="GO" id="GO:0005730">
    <property type="term" value="C:nucleolus"/>
    <property type="evidence" value="ECO:0007669"/>
    <property type="project" value="UniProtKB-SubCell"/>
</dbReference>
<dbReference type="InterPro" id="IPR031404">
    <property type="entry name" value="Rrt14"/>
</dbReference>
<dbReference type="Pfam" id="PF17075">
    <property type="entry name" value="RRT14"/>
    <property type="match status" value="1"/>
</dbReference>
<evidence type="ECO:0000250" key="1"/>
<evidence type="ECO:0000305" key="2"/>
<feature type="chain" id="PRO_0000404347" description="Regulator of rDNA transcription 14">
    <location>
        <begin position="1"/>
        <end position="190"/>
    </location>
</feature>
<keyword id="KW-0539">Nucleus</keyword>
<keyword id="KW-1185">Reference proteome</keyword>
<keyword id="KW-0804">Transcription</keyword>
<keyword id="KW-0805">Transcription regulation</keyword>
<sequence>MSFKSTASKHQAQTTVSKLFANILPNHTIGNDEDKQEKLSSTQLLSNQLKQSSVPLKKVKKKTNAKIKKINDSNTKFKKFVKYNIIKSREEHTVEEQKYLKKLVKRNASQIKNLSHIDNMQIEEELSDVRASLIDKIGKKENKRLRKRKLTSAKNSKFDDFDNKVKRGFISVPGLTPGLAPIDYNESDSE</sequence>
<name>RRT14_PICST</name>